<name>HEXI1_HUMAN</name>
<reference key="1">
    <citation type="journal article" date="1999" name="Biomed. Res.">
        <title>Cloning of hexamethylene-bis-acetamide-inducible transcript, HEXIM1, in human vascular smooth muscle cells.</title>
        <authorList>
            <person name="Kusuhara M."/>
            <person name="Nagasaki K."/>
            <person name="Kimura K."/>
            <person name="Maass N."/>
            <person name="Manabe T."/>
            <person name="Ishikawa S."/>
            <person name="Aikawa M."/>
            <person name="Miyazaki K."/>
            <person name="Yamaguchi K."/>
        </authorList>
    </citation>
    <scope>NUCLEOTIDE SEQUENCE [MRNA]</scope>
    <source>
        <tissue>Vascular smooth muscle</tissue>
    </source>
</reference>
<reference key="2">
    <citation type="journal article" date="2004" name="Nat. Genet.">
        <title>Complete sequencing and characterization of 21,243 full-length human cDNAs.</title>
        <authorList>
            <person name="Ota T."/>
            <person name="Suzuki Y."/>
            <person name="Nishikawa T."/>
            <person name="Otsuki T."/>
            <person name="Sugiyama T."/>
            <person name="Irie R."/>
            <person name="Wakamatsu A."/>
            <person name="Hayashi K."/>
            <person name="Sato H."/>
            <person name="Nagai K."/>
            <person name="Kimura K."/>
            <person name="Makita H."/>
            <person name="Sekine M."/>
            <person name="Obayashi M."/>
            <person name="Nishi T."/>
            <person name="Shibahara T."/>
            <person name="Tanaka T."/>
            <person name="Ishii S."/>
            <person name="Yamamoto J."/>
            <person name="Saito K."/>
            <person name="Kawai Y."/>
            <person name="Isono Y."/>
            <person name="Nakamura Y."/>
            <person name="Nagahari K."/>
            <person name="Murakami K."/>
            <person name="Yasuda T."/>
            <person name="Iwayanagi T."/>
            <person name="Wagatsuma M."/>
            <person name="Shiratori A."/>
            <person name="Sudo H."/>
            <person name="Hosoiri T."/>
            <person name="Kaku Y."/>
            <person name="Kodaira H."/>
            <person name="Kondo H."/>
            <person name="Sugawara M."/>
            <person name="Takahashi M."/>
            <person name="Kanda K."/>
            <person name="Yokoi T."/>
            <person name="Furuya T."/>
            <person name="Kikkawa E."/>
            <person name="Omura Y."/>
            <person name="Abe K."/>
            <person name="Kamihara K."/>
            <person name="Katsuta N."/>
            <person name="Sato K."/>
            <person name="Tanikawa M."/>
            <person name="Yamazaki M."/>
            <person name="Ninomiya K."/>
            <person name="Ishibashi T."/>
            <person name="Yamashita H."/>
            <person name="Murakawa K."/>
            <person name="Fujimori K."/>
            <person name="Tanai H."/>
            <person name="Kimata M."/>
            <person name="Watanabe M."/>
            <person name="Hiraoka S."/>
            <person name="Chiba Y."/>
            <person name="Ishida S."/>
            <person name="Ono Y."/>
            <person name="Takiguchi S."/>
            <person name="Watanabe S."/>
            <person name="Yosida M."/>
            <person name="Hotuta T."/>
            <person name="Kusano J."/>
            <person name="Kanehori K."/>
            <person name="Takahashi-Fujii A."/>
            <person name="Hara H."/>
            <person name="Tanase T.-O."/>
            <person name="Nomura Y."/>
            <person name="Togiya S."/>
            <person name="Komai F."/>
            <person name="Hara R."/>
            <person name="Takeuchi K."/>
            <person name="Arita M."/>
            <person name="Imose N."/>
            <person name="Musashino K."/>
            <person name="Yuuki H."/>
            <person name="Oshima A."/>
            <person name="Sasaki N."/>
            <person name="Aotsuka S."/>
            <person name="Yoshikawa Y."/>
            <person name="Matsunawa H."/>
            <person name="Ichihara T."/>
            <person name="Shiohata N."/>
            <person name="Sano S."/>
            <person name="Moriya S."/>
            <person name="Momiyama H."/>
            <person name="Satoh N."/>
            <person name="Takami S."/>
            <person name="Terashima Y."/>
            <person name="Suzuki O."/>
            <person name="Nakagawa S."/>
            <person name="Senoh A."/>
            <person name="Mizoguchi H."/>
            <person name="Goto Y."/>
            <person name="Shimizu F."/>
            <person name="Wakebe H."/>
            <person name="Hishigaki H."/>
            <person name="Watanabe T."/>
            <person name="Sugiyama A."/>
            <person name="Takemoto M."/>
            <person name="Kawakami B."/>
            <person name="Yamazaki M."/>
            <person name="Watanabe K."/>
            <person name="Kumagai A."/>
            <person name="Itakura S."/>
            <person name="Fukuzumi Y."/>
            <person name="Fujimori Y."/>
            <person name="Komiyama M."/>
            <person name="Tashiro H."/>
            <person name="Tanigami A."/>
            <person name="Fujiwara T."/>
            <person name="Ono T."/>
            <person name="Yamada K."/>
            <person name="Fujii Y."/>
            <person name="Ozaki K."/>
            <person name="Hirao M."/>
            <person name="Ohmori Y."/>
            <person name="Kawabata A."/>
            <person name="Hikiji T."/>
            <person name="Kobatake N."/>
            <person name="Inagaki H."/>
            <person name="Ikema Y."/>
            <person name="Okamoto S."/>
            <person name="Okitani R."/>
            <person name="Kawakami T."/>
            <person name="Noguchi S."/>
            <person name="Itoh T."/>
            <person name="Shigeta K."/>
            <person name="Senba T."/>
            <person name="Matsumura K."/>
            <person name="Nakajima Y."/>
            <person name="Mizuno T."/>
            <person name="Morinaga M."/>
            <person name="Sasaki M."/>
            <person name="Togashi T."/>
            <person name="Oyama M."/>
            <person name="Hata H."/>
            <person name="Watanabe M."/>
            <person name="Komatsu T."/>
            <person name="Mizushima-Sugano J."/>
            <person name="Satoh T."/>
            <person name="Shirai Y."/>
            <person name="Takahashi Y."/>
            <person name="Nakagawa K."/>
            <person name="Okumura K."/>
            <person name="Nagase T."/>
            <person name="Nomura N."/>
            <person name="Kikuchi H."/>
            <person name="Masuho Y."/>
            <person name="Yamashita R."/>
            <person name="Nakai K."/>
            <person name="Yada T."/>
            <person name="Nakamura Y."/>
            <person name="Ohara O."/>
            <person name="Isogai T."/>
            <person name="Sugano S."/>
        </authorList>
    </citation>
    <scope>NUCLEOTIDE SEQUENCE [LARGE SCALE MRNA]</scope>
    <source>
        <tissue>Pericardium</tissue>
    </source>
</reference>
<reference key="3">
    <citation type="journal article" date="2004" name="Genome Res.">
        <title>The status, quality, and expansion of the NIH full-length cDNA project: the Mammalian Gene Collection (MGC).</title>
        <authorList>
            <consortium name="The MGC Project Team"/>
        </authorList>
    </citation>
    <scope>NUCLEOTIDE SEQUENCE [LARGE SCALE MRNA]</scope>
    <source>
        <tissue>Lung</tissue>
    </source>
</reference>
<reference key="4">
    <citation type="journal article" date="2003" name="Cancer Res.">
        <title>Identification of a novel inhibitor of breast cell growth that is down-regulated by estrogens and decreased in breast tumors.</title>
        <authorList>
            <person name="Wittmann B.M."/>
            <person name="Wang N."/>
            <person name="Montano M.M."/>
        </authorList>
    </citation>
    <scope>SUBCELLULAR LOCATION</scope>
    <scope>TISSUE SPECIFICITY</scope>
    <scope>INDUCTION BY ESTROGEN</scope>
</reference>
<reference key="5">
    <citation type="journal article" date="2003" name="Genes Cells">
        <title>Suppression of NF-kappaB-dependent gene expression by a hexamethylene bisacetamide-inducible protein HEXIM1 in human vascular smooth muscle cells.</title>
        <authorList>
            <person name="Ouchida R."/>
            <person name="Kusuhara M."/>
            <person name="Shimizu N."/>
            <person name="Hisada T."/>
            <person name="Makino Y."/>
            <person name="Morimoto C."/>
            <person name="Handa H."/>
            <person name="Ohsuzu F."/>
            <person name="Tanaka H."/>
        </authorList>
    </citation>
    <scope>FUNCTION</scope>
    <scope>INTERACTION WITH RELA</scope>
    <scope>SUBCELLULAR LOCATION</scope>
    <scope>INDUCTION BY HMBA</scope>
</reference>
<reference key="6">
    <citation type="journal article" date="2003" name="Mol. Cell">
        <title>Inhibition of P-TEFb (CDK9/Cyclin T) kinase and RNA polymerase II transcription by the coordinated actions of HEXIM1 and 7SK snRNA.</title>
        <authorList>
            <person name="Yik J.H.N."/>
            <person name="Chen R."/>
            <person name="Nishimura R."/>
            <person name="Jennings J.L."/>
            <person name="Link A.J."/>
            <person name="Zhou Q."/>
        </authorList>
    </citation>
    <scope>FUNCTION</scope>
</reference>
<reference key="7">
    <citation type="journal article" date="2003" name="Mol. Cell. Biol.">
        <title>MAQ1 and 7SK RNA interact with CDK9/cyclin T complexes in a transcription-dependent manner.</title>
        <authorList>
            <person name="Michels A.A."/>
            <person name="Nguyen V.T."/>
            <person name="Fraldi A."/>
            <person name="Labas V."/>
            <person name="Edwards M."/>
            <person name="Bonnet F."/>
            <person name="Lania L."/>
            <person name="Bensaude O."/>
        </authorList>
    </citation>
    <scope>FUNCTION</scope>
    <scope>IDENTIFICATION BY MASS SPECTROMETRY</scope>
    <scope>IDENTIFICATION IN THE 7SK RNP COMPLEX</scope>
    <scope>INTERACTION WITH CCNT1</scope>
    <scope>SUBCELLULAR LOCATION</scope>
</reference>
<reference key="8">
    <citation type="journal article" date="2004" name="EMBO J.">
        <title>Binding of the 7SK snRNA turns the HEXIM1 protein into a P-TEFb (CDK9/cyclin T) inhibitor.</title>
        <authorList>
            <person name="Michels A.A."/>
            <person name="Fraldi A."/>
            <person name="Li Q."/>
            <person name="Adamson T.E."/>
            <person name="Bonnet F."/>
            <person name="Nguyen V.T."/>
            <person name="Sedore S.C."/>
            <person name="Price J.P."/>
            <person name="Price D.H."/>
            <person name="Lania L."/>
            <person name="Bensaude O."/>
        </authorList>
    </citation>
    <scope>FUNCTION</scope>
    <scope>MUTAGENESIS OF 152-LYS--ARG-155; TYR-203 AND THR-205</scope>
    <scope>INTERACTION WITH P-TEFB</scope>
</reference>
<reference key="9">
    <citation type="journal article" date="2004" name="Mol. Cell. Biol.">
        <title>A human immunodeficiency virus type 1 Tat-like arginine-rich RNA-binding domain is essential for HEXIM1 to inhibit RNA polymerase II transcription through 7SK snRNA-mediated inactivation of P-TEFb.</title>
        <authorList>
            <person name="Yik J.H.N."/>
            <person name="Chen R."/>
            <person name="Pezda A.C."/>
            <person name="Samford C.S."/>
            <person name="Zhou Q."/>
        </authorList>
    </citation>
    <scope>INTERACTION WITH P-TEFB</scope>
</reference>
<reference key="10">
    <citation type="journal article" date="2005" name="EMBO J.">
        <title>Interplay between 7SK snRNA and oppositely charged regions in HEXIM1 direct the inhibition of P-TEFb.</title>
        <authorList>
            <person name="Barboric M."/>
            <person name="Kohoutek J."/>
            <person name="Price J.P."/>
            <person name="Blazek D."/>
            <person name="Price D.H."/>
            <person name="Peterlin B.M."/>
        </authorList>
    </citation>
    <scope>SUBCELLULAR LOCATION</scope>
    <scope>INTERACTION WITH THE 7SK SNRNA AND P-TEFB</scope>
    <scope>MUTAGENESIS OF 154-ARG--ARG-156</scope>
</reference>
<reference key="11">
    <citation type="journal article" date="2005" name="J. Biol. Chem.">
        <title>Compensatory contributions of HEXIM1 and HEXIM2 in maintaining the balance of active and inactive positive transcription elongation factor b complexes for control of transcription.</title>
        <authorList>
            <person name="Yik J.H.N."/>
            <person name="Chen R."/>
            <person name="Pezda A.C."/>
            <person name="Zhou Q."/>
        </authorList>
    </citation>
    <scope>FUNCTION</scope>
    <scope>INTERACTION WITH HEXIM2</scope>
    <scope>OLIGOMERIZATION</scope>
    <scope>TISSUE SPECIFICITY</scope>
    <scope>INDUCTION</scope>
</reference>
<reference key="12">
    <citation type="journal article" date="2005" name="J. Biol. Chem.">
        <title>Identification of a cyclin T-binding domain in Hexim1 and biochemical analysis of its binding competition with HIV-1 Tat.</title>
        <authorList>
            <person name="Schulte A."/>
            <person name="Czudnochowski N."/>
            <person name="Barboric M."/>
            <person name="Schoenichen A."/>
            <person name="Blazek D."/>
            <person name="Peterlin B.M."/>
            <person name="Geyer M."/>
        </authorList>
    </citation>
    <scope>INTERACTION WITH CCNT1</scope>
</reference>
<reference key="13">
    <citation type="journal article" date="2005" name="J. Biol. Chem.">
        <title>Analysis of the large inactive P-TEFb complex indicates that it contains one 7SK molecule, a dimer of HEXIM1 or HEXIM2, and two P-TEFb molecules containing Cdk9 phosphorylated at threonine 186.</title>
        <authorList>
            <person name="Li Q."/>
            <person name="Price J.P."/>
            <person name="Byers S.A."/>
            <person name="Cheng D."/>
            <person name="Peng J."/>
            <person name="Price D.H."/>
        </authorList>
    </citation>
    <scope>OLIGOMERIZATION</scope>
    <scope>MUTAGENESIS OF PHE-208 AND TYR-271</scope>
</reference>
<reference key="14">
    <citation type="journal article" date="2005" name="Nucleic Acids Res.">
        <title>Oligomerization of HEXIM1 via 7SK snRNA and coiled-coil region directs the inhibition of P-TEFb.</title>
        <authorList>
            <person name="Blazek D."/>
            <person name="Barboric M."/>
            <person name="Kohoutek J."/>
            <person name="Oven I."/>
            <person name="Peterlin B.M."/>
        </authorList>
    </citation>
    <scope>INTERACTION WITH P-TEFB</scope>
    <scope>OLIGOMERIZATION</scope>
    <scope>MUTAGENESIS OF LEU-287; LEU-294; LEU-332 AND LEU-339</scope>
</reference>
<reference key="15">
    <citation type="journal article" date="2005" name="Oncogene">
        <title>The breast cell growth inhibitor, estrogen down regulated gene 1, modulates a novel functional interaction between estrogen receptor alpha and transcriptional elongation factor cyclin T1.</title>
        <authorList>
            <person name="Wittmann B.M."/>
            <person name="Fujinaga K."/>
            <person name="Deng H."/>
            <person name="Ogba N."/>
            <person name="Montano M.M."/>
        </authorList>
    </citation>
    <scope>FUNCTION IN ESR1-DEPENDENT TRANSCRIPTION</scope>
    <scope>INTERACTION WITH ESR1</scope>
</reference>
<reference key="16">
    <citation type="journal article" date="2005" name="Proc. Natl. Acad. Sci. U.S.A.">
        <title>HEXIM1 forms a transcriptionally abortive complex with glucocorticoid receptor without involving 7SK RNA and positive transcription elongation factor b.</title>
        <authorList>
            <person name="Shimizu N."/>
            <person name="Ouchida R."/>
            <person name="Yoshikawa N."/>
            <person name="Hisada T."/>
            <person name="Watanabe H."/>
            <person name="Okamoto K."/>
            <person name="Kusuhara M."/>
            <person name="Handa H."/>
            <person name="Morimoto C."/>
            <person name="Tanaka H."/>
        </authorList>
    </citation>
    <scope>FUNCTION IN NR3C1-DEPENDENT TRANSCRIPTION</scope>
    <scope>INTERACTION WITH NR3C1</scope>
</reference>
<reference key="17">
    <citation type="journal article" date="2006" name="Proc. Natl. Acad. Sci. U.S.A.">
        <title>Hexim1 sequesters positive transcription elongation factor b from the class II transactivator on MHC class II promoters.</title>
        <authorList>
            <person name="Kohoutek J."/>
            <person name="Blazek D."/>
            <person name="Peterlin B.M."/>
        </authorList>
    </citation>
    <scope>FUNCTION IN CIITA-DEPENDENT TRANSCRIPTION</scope>
</reference>
<reference key="18">
    <citation type="journal article" date="2007" name="Mol. Cell">
        <title>Systematic analysis of the protein interaction network for the human transcription machinery reveals the identity of the 7SK capping enzyme.</title>
        <authorList>
            <person name="Jeronimo C."/>
            <person name="Forget D."/>
            <person name="Bouchard A."/>
            <person name="Li Q."/>
            <person name="Chua G."/>
            <person name="Poitras C."/>
            <person name="Therien C."/>
            <person name="Bergeron D."/>
            <person name="Bourassa S."/>
            <person name="Greenblatt J."/>
            <person name="Chabot B."/>
            <person name="Poirier G.G."/>
            <person name="Hughes T.R."/>
            <person name="Blanchette M."/>
            <person name="Price D.H."/>
            <person name="Coulombe B."/>
        </authorList>
    </citation>
    <scope>IDENTIFICATION IN THE 7SK RNP COMPLEX</scope>
</reference>
<reference key="19">
    <citation type="journal article" date="2007" name="Mol. Cell. Biol.">
        <title>Regulation of P-TEFb elongation complex activity by CDK9 acetylation.</title>
        <authorList>
            <person name="Fu J."/>
            <person name="Yoon H.-G."/>
            <person name="Qin J."/>
            <person name="Wong J."/>
        </authorList>
    </citation>
    <scope>INTERACTION WITH NCOR1</scope>
</reference>
<reference key="20">
    <citation type="journal article" date="2007" name="Nucleic Acids Res.">
        <title>HEXIM1 is a promiscuous double-stranded RNA-binding protein and interacts with RNAs in addition to 7SK in cultured cells.</title>
        <authorList>
            <person name="Li Q."/>
            <person name="Cooper J.J."/>
            <person name="Altwerger G.H."/>
            <person name="Feldkamp M.D."/>
            <person name="Shea M.A."/>
            <person name="Price D.H."/>
        </authorList>
    </citation>
    <scope>SUBCELLULAR LOCATION</scope>
</reference>
<reference key="21">
    <citation type="journal article" date="2008" name="Proc. Natl. Acad. Sci. U.S.A.">
        <title>A quantitative atlas of mitotic phosphorylation.</title>
        <authorList>
            <person name="Dephoure N."/>
            <person name="Zhou C."/>
            <person name="Villen J."/>
            <person name="Beausoleil S.A."/>
            <person name="Bakalarski C.E."/>
            <person name="Elledge S.J."/>
            <person name="Gygi S.P."/>
        </authorList>
    </citation>
    <scope>PHOSPHORYLATION [LARGE SCALE ANALYSIS] AT SER-97; SER-98; SER-233; THR-236; SER-237 AND SER-252</scope>
    <scope>IDENTIFICATION BY MASS SPECTROMETRY [LARGE SCALE ANALYSIS]</scope>
    <source>
        <tissue>Cervix carcinoma</tissue>
    </source>
</reference>
<reference key="22">
    <citation type="journal article" date="2009" name="Sci. Signal.">
        <title>Quantitative phosphoproteomic analysis of T cell receptor signaling reveals system-wide modulation of protein-protein interactions.</title>
        <authorList>
            <person name="Mayya V."/>
            <person name="Lundgren D.H."/>
            <person name="Hwang S.-I."/>
            <person name="Rezaul K."/>
            <person name="Wu L."/>
            <person name="Eng J.K."/>
            <person name="Rodionov V."/>
            <person name="Han D.K."/>
        </authorList>
    </citation>
    <scope>PHOSPHORYLATION [LARGE SCALE ANALYSIS] AT SER-233; THR-236; SER-237 AND SER-252</scope>
    <scope>IDENTIFICATION BY MASS SPECTROMETRY [LARGE SCALE ANALYSIS]</scope>
    <source>
        <tissue>Leukemic T-cell</tissue>
    </source>
</reference>
<reference key="23">
    <citation type="journal article" date="2010" name="J. Mol. Biol.">
        <title>Specificity of Hexim1 and Hexim2 complex formation with cyclin T1/T2, importin alpha and 7SK snRNA.</title>
        <authorList>
            <person name="Czudnochowski N."/>
            <person name="Vollmuth F."/>
            <person name="Baumann S."/>
            <person name="Vogel-Bachmayr K."/>
            <person name="Geyer M."/>
        </authorList>
    </citation>
    <scope>INTERACTION WITH CCNT2</scope>
</reference>
<reference key="24">
    <citation type="journal article" date="2010" name="Sci. Signal.">
        <title>Quantitative phosphoproteomics reveals widespread full phosphorylation site occupancy during mitosis.</title>
        <authorList>
            <person name="Olsen J.V."/>
            <person name="Vermeulen M."/>
            <person name="Santamaria A."/>
            <person name="Kumar C."/>
            <person name="Miller M.L."/>
            <person name="Jensen L.J."/>
            <person name="Gnad F."/>
            <person name="Cox J."/>
            <person name="Jensen T.S."/>
            <person name="Nigg E.A."/>
            <person name="Brunak S."/>
            <person name="Mann M."/>
        </authorList>
    </citation>
    <scope>PHOSPHORYLATION [LARGE SCALE ANALYSIS] AT SER-233; THR-236; SER-237 AND SER-252</scope>
    <scope>IDENTIFICATION BY MASS SPECTROMETRY [LARGE SCALE ANALYSIS]</scope>
    <source>
        <tissue>Cervix carcinoma</tissue>
    </source>
</reference>
<reference key="25">
    <citation type="journal article" date="2011" name="BMC Syst. Biol.">
        <title>Initial characterization of the human central proteome.</title>
        <authorList>
            <person name="Burkard T.R."/>
            <person name="Planyavsky M."/>
            <person name="Kaupe I."/>
            <person name="Breitwieser F.P."/>
            <person name="Buerckstuemmer T."/>
            <person name="Bennett K.L."/>
            <person name="Superti-Furga G."/>
            <person name="Colinge J."/>
        </authorList>
    </citation>
    <scope>IDENTIFICATION BY MASS SPECTROMETRY [LARGE SCALE ANALYSIS]</scope>
</reference>
<reference key="26">
    <citation type="journal article" date="2011" name="Sci. Signal.">
        <title>System-wide temporal characterization of the proteome and phosphoproteome of human embryonic stem cell differentiation.</title>
        <authorList>
            <person name="Rigbolt K.T."/>
            <person name="Prokhorova T.A."/>
            <person name="Akimov V."/>
            <person name="Henningsen J."/>
            <person name="Johansen P.T."/>
            <person name="Kratchmarova I."/>
            <person name="Kassem M."/>
            <person name="Mann M."/>
            <person name="Olsen J.V."/>
            <person name="Blagoev B."/>
        </authorList>
    </citation>
    <scope>PHOSPHORYLATION [LARGE SCALE ANALYSIS] AT SER-252</scope>
    <scope>IDENTIFICATION BY MASS SPECTROMETRY [LARGE SCALE ANALYSIS]</scope>
</reference>
<reference key="27">
    <citation type="journal article" date="2013" name="J. Proteome Res.">
        <title>Toward a comprehensive characterization of a human cancer cell phosphoproteome.</title>
        <authorList>
            <person name="Zhou H."/>
            <person name="Di Palma S."/>
            <person name="Preisinger C."/>
            <person name="Peng M."/>
            <person name="Polat A.N."/>
            <person name="Heck A.J."/>
            <person name="Mohammed S."/>
        </authorList>
    </citation>
    <scope>IDENTIFICATION BY MASS SPECTROMETRY [LARGE SCALE ANALYSIS]</scope>
    <source>
        <tissue>Erythroleukemia</tissue>
    </source>
</reference>
<reference key="28">
    <citation type="journal article" date="2017" name="Mol. Cell">
        <title>HEXIM1 and NEAT1 Long non-coding RNA form a multi-subunit complex that regulates DNA-mediated innate immune response.</title>
        <authorList>
            <person name="Morchikh M."/>
            <person name="Cribier A."/>
            <person name="Raffel R."/>
            <person name="Amraoui S."/>
            <person name="Cau J."/>
            <person name="Severac D."/>
            <person name="Dubois E."/>
            <person name="Schwartz O."/>
            <person name="Bennasser Y."/>
            <person name="Benkirane M."/>
        </authorList>
    </citation>
    <scope>FUNCTION</scope>
    <scope>SUBCELLULAR LOCATION</scope>
    <scope>INTERACTION WITH PRKDC; XRCC5; XRCC6; SFPQ; NONO; PSPC1; RBM14 AND MATR3</scope>
</reference>
<reference key="29">
    <citation type="journal article" date="2018" name="Cell Rep.">
        <title>Positive Regulation of Transcription by Human ZMYND8 through Its Association with P-TEFb Complex.</title>
        <authorList>
            <person name="Ghosh K."/>
            <person name="Tang M."/>
            <person name="Kumari N."/>
            <person name="Nandy A."/>
            <person name="Basu S."/>
            <person name="Mall D.P."/>
            <person name="Rai K."/>
            <person name="Biswas D."/>
        </authorList>
    </citation>
    <scope>INTERACTION WITH CDK9</scope>
</reference>
<reference key="30">
    <citation type="journal article" date="2007" name="Proc. Natl. Acad. Sci. U.S.A.">
        <title>Structure of the Cyclin T binding domain of Hexim1 and molecular basis for its recognition of P-TEFb.</title>
        <authorList>
            <person name="Dames S.A."/>
            <person name="Schoenichen A."/>
            <person name="Schulte A."/>
            <person name="Barboric M."/>
            <person name="Peterlin B.M."/>
            <person name="Grzesiek S."/>
            <person name="Geyer M."/>
        </authorList>
    </citation>
    <scope>STRUCTURE BY NMR OF 255-359</scope>
    <scope>SUBUNIT</scope>
    <scope>INTERACTION WITH CCNT1</scope>
</reference>
<sequence>MAEPFLSEYQHQPQTSNCTGAAAVQEELNPERPPGAEERVPEEDSRWQSRAFPQLGGRPGPEGEGSLESQPPPLQTQACPESSCLREGEKGQNGDDSSAGGDFPPPAEVEPTPEAELLAQPCHDSEASKLGAPAAGGEEEWGQQQRQLGKKKHRRRPSKKKRHWKPYYKLTWEEKKKFDEKQSLRASRIRAEMFAKGQPVAPYNTTQFLMDDHDQEEPDLKTGLYSKRAAAKSDDTSDDDFMEEGGEEDGGSDGMGGDGSEFLQRDFSETYERYHTESLQNMSKQELIKEYLELEKCLSRMEDENNRLRLESKRLGGDDARVRELELELDRLRAENLQLLTENELHRQQERAPLSKFGD</sequence>
<protein>
    <recommendedName>
        <fullName>Protein HEXIM1</fullName>
    </recommendedName>
    <alternativeName>
        <fullName>Cardiac lineage protein 1</fullName>
    </alternativeName>
    <alternativeName>
        <fullName>Estrogen down-regulated gene 1 protein</fullName>
    </alternativeName>
    <alternativeName>
        <fullName>Hexamethylene bis-acetamide-inducible protein 1</fullName>
    </alternativeName>
    <alternativeName>
        <fullName>Menage a quatre protein 1</fullName>
    </alternativeName>
</protein>
<keyword id="KW-0002">3D-structure</keyword>
<keyword id="KW-0175">Coiled coil</keyword>
<keyword id="KW-0963">Cytoplasm</keyword>
<keyword id="KW-0391">Immunity</keyword>
<keyword id="KW-0399">Innate immunity</keyword>
<keyword id="KW-0539">Nucleus</keyword>
<keyword id="KW-0597">Phosphoprotein</keyword>
<keyword id="KW-1267">Proteomics identification</keyword>
<keyword id="KW-1185">Reference proteome</keyword>
<keyword id="KW-0678">Repressor</keyword>
<keyword id="KW-0804">Transcription</keyword>
<keyword id="KW-0805">Transcription regulation</keyword>
<proteinExistence type="evidence at protein level"/>
<gene>
    <name type="primary">HEXIM1</name>
    <name type="synonym">CLP1</name>
    <name type="synonym">EDG1</name>
    <name type="synonym">HIS1</name>
    <name type="synonym">MAQ1</name>
</gene>
<comment type="function">
    <text evidence="4 5 7 9 10 12 13 17 23">Transcriptional regulator which functions as a general RNA polymerase II transcription inhibitor (PubMed:14580347, PubMed:15201869, PubMed:15713661). Core component of the 7SK RNP complex: in cooperation with 7SK snRNA sequesters P-TEFb in a large inactive 7SK snRNP complex preventing RNA polymerase II phosphorylation and subsequent transcriptional elongation (PubMed:12832472, PubMed:14580347, PubMed:15201869, PubMed:15713661). May also regulate NF-kappa-B, ESR1, NR3C1 and CIITA-dependent transcriptional activity (PubMed:15940264, PubMed:15941832, PubMed:17088550). Plays a role in the regulation of DNA virus-mediated innate immune response by assembling into the HDP-RNP complex, a complex that serves as a platform for IRF3 phosphorylation and subsequent innate immune response activation through the cGAS-STING pathway (PubMed:28712728).</text>
</comment>
<comment type="subunit">
    <text evidence="4 5 8 9 10 11 12 13 14 15 16 19 20 21 22 23 24">Homooligomer and heterooligomer with HEXIM2; probably dimeric (PubMed:15713661, PubMed:15965233, PubMed:16377779). Core component of the 7SK RNP complex, at least composed of 7SK RNA, LARP7, MEPCE, HEXIM1 (or HEXIM2) and P-TEFb (composed of CDK9 and CCNT1/cyclin-T1) (PubMed:12832472, PubMed:15169877, PubMed:15201869, PubMed:15713661, PubMed:15855166, PubMed:16362050, PubMed:16377779, PubMed:17643375, PubMed:17724342, PubMed:30134174). Interacts with the N-CoR complex through NCOR1 (PubMed:17452463). Interacts with ESR1 and NR3C1 (PubMed:15940264, PubMed:15941832). May interact with NF-kappa-B through RELA (PubMed:12581153). Interacts with CCNT2; mediates formation of a tripartite complex with KPNA2 (PubMed:19883659). Part of the HDP-RNP complex composed of at least HEXIM1, PRKDC, XRCC5, XRCC6, paraspeckle proteins (SFPQ, NONO, PSPC1, RBM14, and MATR3) and NEAT1 non-coding RNA (PubMed:28712728).</text>
</comment>
<comment type="interaction">
    <interactant intactId="EBI-2832510">
        <id>O94992</id>
    </interactant>
    <interactant intactId="EBI-2479671">
        <id>O60563</id>
        <label>CCNT1</label>
    </interactant>
    <organismsDiffer>false</organismsDiffer>
    <experiments>13</experiments>
</comment>
<comment type="interaction">
    <interactant intactId="EBI-2832510">
        <id>O94992</id>
    </interactant>
    <interactant intactId="EBI-1383449">
        <id>P50750</id>
        <label>CDK9</label>
    </interactant>
    <organismsDiffer>false</organismsDiffer>
    <experiments>17</experiments>
</comment>
<comment type="interaction">
    <interactant intactId="EBI-2832510">
        <id>O94992</id>
    </interactant>
    <interactant intactId="EBI-2832510">
        <id>O94992</id>
        <label>HEXIM1</label>
    </interactant>
    <organismsDiffer>false</organismsDiffer>
    <experiments>2</experiments>
</comment>
<comment type="interaction">
    <interactant intactId="EBI-2832510">
        <id>O94992</id>
    </interactant>
    <interactant intactId="EBI-5460660">
        <id>Q96MH2</id>
        <label>HEXIM2</label>
    </interactant>
    <organismsDiffer>false</organismsDiffer>
    <experiments>7</experiments>
</comment>
<comment type="interaction">
    <interactant intactId="EBI-2832510">
        <id>O94992</id>
    </interactant>
    <interactant intactId="EBI-2371923">
        <id>Q4G0J3</id>
        <label>LARP7</label>
    </interactant>
    <organismsDiffer>false</organismsDiffer>
    <experiments>16</experiments>
</comment>
<comment type="interaction">
    <interactant intactId="EBI-2832510">
        <id>O94992</id>
    </interactant>
    <interactant intactId="EBI-706637">
        <id>Q15554</id>
        <label>TERF2</label>
    </interactant>
    <organismsDiffer>false</organismsDiffer>
    <experiments>2</experiments>
</comment>
<comment type="subcellular location">
    <subcellularLocation>
        <location evidence="4 5 6 15 18">Nucleus</location>
    </subcellularLocation>
    <subcellularLocation>
        <location evidence="4 18">Cytoplasm</location>
    </subcellularLocation>
    <text>Binds alpha-importin and is mostly nuclear (PubMed:16362050).</text>
</comment>
<comment type="tissue specificity">
    <text evidence="6 10">Ubiquitously expressed with higher expression in placenta. HEXIM1 and HEXIM2 are differentially expressed. Expressed in endocrine tissues.</text>
</comment>
<comment type="induction">
    <text evidence="4 6 10">Up-regulated by HMBA (hexamethylene bisacetamide) (at protein level). Down-regulated by estrogen.</text>
</comment>
<comment type="domain">
    <text>The coiled-coil domain mediates oligomerization.</text>
</comment>
<comment type="miscellaneous">
    <text>Inhibits Tat activity which is required for HIV-1 transcription.</text>
</comment>
<comment type="similarity">
    <text evidence="25">Belongs to the HEXIM family.</text>
</comment>
<dbReference type="EMBL" id="AB021179">
    <property type="protein sequence ID" value="BAA36166.1"/>
    <property type="molecule type" value="mRNA"/>
</dbReference>
<dbReference type="EMBL" id="AK313557">
    <property type="protein sequence ID" value="BAG36332.1"/>
    <property type="molecule type" value="mRNA"/>
</dbReference>
<dbReference type="EMBL" id="BC006460">
    <property type="protein sequence ID" value="AAH06460.1"/>
    <property type="molecule type" value="mRNA"/>
</dbReference>
<dbReference type="CCDS" id="CCDS11495.1"/>
<dbReference type="RefSeq" id="NP_006451.1">
    <property type="nucleotide sequence ID" value="NM_006460.3"/>
</dbReference>
<dbReference type="PDB" id="2GD7">
    <property type="method" value="NMR"/>
    <property type="chains" value="A/B=255-359"/>
</dbReference>
<dbReference type="PDB" id="3S9G">
    <property type="method" value="X-ray"/>
    <property type="resolution" value="2.10 A"/>
    <property type="chains" value="A/B=255-359"/>
</dbReference>
<dbReference type="PDBsum" id="2GD7"/>
<dbReference type="PDBsum" id="3S9G"/>
<dbReference type="BMRB" id="O94992"/>
<dbReference type="SASBDB" id="O94992"/>
<dbReference type="SMR" id="O94992"/>
<dbReference type="BioGRID" id="115860">
    <property type="interactions" value="918"/>
</dbReference>
<dbReference type="CORUM" id="O94992"/>
<dbReference type="DIP" id="DIP-46463N"/>
<dbReference type="FunCoup" id="O94992">
    <property type="interactions" value="3354"/>
</dbReference>
<dbReference type="IntAct" id="O94992">
    <property type="interactions" value="99"/>
</dbReference>
<dbReference type="MINT" id="O94992"/>
<dbReference type="STRING" id="9606.ENSP00000328773"/>
<dbReference type="ChEMBL" id="CHEMBL3120044"/>
<dbReference type="GlyGen" id="O94992">
    <property type="glycosylation" value="4 sites, 2 N-linked glycans (2 sites), 1 O-linked glycan (1 site)"/>
</dbReference>
<dbReference type="iPTMnet" id="O94992"/>
<dbReference type="PhosphoSitePlus" id="O94992"/>
<dbReference type="SwissPalm" id="O94992"/>
<dbReference type="BioMuta" id="HEXIM1"/>
<dbReference type="jPOST" id="O94992"/>
<dbReference type="MassIVE" id="O94992"/>
<dbReference type="PaxDb" id="9606-ENSP00000328773"/>
<dbReference type="PeptideAtlas" id="O94992"/>
<dbReference type="ProteomicsDB" id="50620"/>
<dbReference type="Pumba" id="O94992"/>
<dbReference type="Antibodypedia" id="1837">
    <property type="antibodies" value="457 antibodies from 39 providers"/>
</dbReference>
<dbReference type="DNASU" id="10614"/>
<dbReference type="Ensembl" id="ENST00000332499.4">
    <property type="protein sequence ID" value="ENSP00000328773.3"/>
    <property type="gene ID" value="ENSG00000186834.4"/>
</dbReference>
<dbReference type="GeneID" id="10614"/>
<dbReference type="KEGG" id="hsa:10614"/>
<dbReference type="MANE-Select" id="ENST00000332499.4">
    <property type="protein sequence ID" value="ENSP00000328773.3"/>
    <property type="RefSeq nucleotide sequence ID" value="NM_006460.3"/>
    <property type="RefSeq protein sequence ID" value="NP_006451.1"/>
</dbReference>
<dbReference type="UCSC" id="uc002iig.4">
    <property type="organism name" value="human"/>
</dbReference>
<dbReference type="AGR" id="HGNC:24953"/>
<dbReference type="CTD" id="10614"/>
<dbReference type="DisGeNET" id="10614"/>
<dbReference type="GeneCards" id="HEXIM1"/>
<dbReference type="HGNC" id="HGNC:24953">
    <property type="gene designation" value="HEXIM1"/>
</dbReference>
<dbReference type="HPA" id="ENSG00000186834">
    <property type="expression patterns" value="Low tissue specificity"/>
</dbReference>
<dbReference type="MIM" id="607328">
    <property type="type" value="gene"/>
</dbReference>
<dbReference type="neXtProt" id="NX_O94992"/>
<dbReference type="OpenTargets" id="ENSG00000186834"/>
<dbReference type="PharmGKB" id="PA142671694"/>
<dbReference type="VEuPathDB" id="HostDB:ENSG00000186834"/>
<dbReference type="eggNOG" id="ENOG502QQP8">
    <property type="taxonomic scope" value="Eukaryota"/>
</dbReference>
<dbReference type="GeneTree" id="ENSGT00390000002808"/>
<dbReference type="HOGENOM" id="CLU_066028_0_0_1"/>
<dbReference type="InParanoid" id="O94992"/>
<dbReference type="OMA" id="YTLTWEE"/>
<dbReference type="OrthoDB" id="10058500at2759"/>
<dbReference type="PAN-GO" id="O94992">
    <property type="GO annotations" value="6 GO annotations based on evolutionary models"/>
</dbReference>
<dbReference type="PhylomeDB" id="O94992"/>
<dbReference type="TreeFam" id="TF336851"/>
<dbReference type="PathwayCommons" id="O94992"/>
<dbReference type="SignaLink" id="O94992"/>
<dbReference type="SIGNOR" id="O94992"/>
<dbReference type="BioGRID-ORCS" id="10614">
    <property type="hits" value="119 hits in 1151 CRISPR screens"/>
</dbReference>
<dbReference type="ChiTaRS" id="HEXIM1">
    <property type="organism name" value="human"/>
</dbReference>
<dbReference type="EvolutionaryTrace" id="O94992"/>
<dbReference type="GeneWiki" id="HEXIM1"/>
<dbReference type="GenomeRNAi" id="10614"/>
<dbReference type="Pharos" id="O94992">
    <property type="development level" value="Tbio"/>
</dbReference>
<dbReference type="PRO" id="PR:O94992"/>
<dbReference type="Proteomes" id="UP000005640">
    <property type="component" value="Chromosome 17"/>
</dbReference>
<dbReference type="RNAct" id="O94992">
    <property type="molecule type" value="protein"/>
</dbReference>
<dbReference type="Bgee" id="ENSG00000186834">
    <property type="expression patterns" value="Expressed in esophagus squamous epithelium and 207 other cell types or tissues"/>
</dbReference>
<dbReference type="GO" id="GO:0120259">
    <property type="term" value="C:7SK snRNP"/>
    <property type="evidence" value="ECO:0000314"/>
    <property type="project" value="FlyBase"/>
</dbReference>
<dbReference type="GO" id="GO:0005737">
    <property type="term" value="C:cytoplasm"/>
    <property type="evidence" value="ECO:0000314"/>
    <property type="project" value="HGNC-UCL"/>
</dbReference>
<dbReference type="GO" id="GO:0043231">
    <property type="term" value="C:intracellular membrane-bounded organelle"/>
    <property type="evidence" value="ECO:0000314"/>
    <property type="project" value="HPA"/>
</dbReference>
<dbReference type="GO" id="GO:0005654">
    <property type="term" value="C:nucleoplasm"/>
    <property type="evidence" value="ECO:0000314"/>
    <property type="project" value="HPA"/>
</dbReference>
<dbReference type="GO" id="GO:0005634">
    <property type="term" value="C:nucleus"/>
    <property type="evidence" value="ECO:0000314"/>
    <property type="project" value="UniProtKB"/>
</dbReference>
<dbReference type="GO" id="GO:0097322">
    <property type="term" value="F:7SK snRNA binding"/>
    <property type="evidence" value="ECO:0000314"/>
    <property type="project" value="UniProtKB"/>
</dbReference>
<dbReference type="GO" id="GO:0004861">
    <property type="term" value="F:cyclin-dependent protein serine/threonine kinase inhibitor activity"/>
    <property type="evidence" value="ECO:0000314"/>
    <property type="project" value="HGNC-UCL"/>
</dbReference>
<dbReference type="GO" id="GO:0042802">
    <property type="term" value="F:identical protein binding"/>
    <property type="evidence" value="ECO:0000353"/>
    <property type="project" value="IntAct"/>
</dbReference>
<dbReference type="GO" id="GO:0106140">
    <property type="term" value="F:P-TEFb complex binding"/>
    <property type="evidence" value="ECO:0000314"/>
    <property type="project" value="FlyBase"/>
</dbReference>
<dbReference type="GO" id="GO:0004860">
    <property type="term" value="F:protein kinase inhibitor activity"/>
    <property type="evidence" value="ECO:0000314"/>
    <property type="project" value="FlyBase"/>
</dbReference>
<dbReference type="GO" id="GO:0017069">
    <property type="term" value="F:snRNA binding"/>
    <property type="evidence" value="ECO:0000314"/>
    <property type="project" value="HGNC-UCL"/>
</dbReference>
<dbReference type="GO" id="GO:0140416">
    <property type="term" value="F:transcription regulator inhibitor activity"/>
    <property type="evidence" value="ECO:0000314"/>
    <property type="project" value="HGNC-UCL"/>
</dbReference>
<dbReference type="GO" id="GO:0002218">
    <property type="term" value="P:activation of innate immune response"/>
    <property type="evidence" value="ECO:0000314"/>
    <property type="project" value="UniProtKB"/>
</dbReference>
<dbReference type="GO" id="GO:0007507">
    <property type="term" value="P:heart development"/>
    <property type="evidence" value="ECO:0007669"/>
    <property type="project" value="Ensembl"/>
</dbReference>
<dbReference type="GO" id="GO:0045087">
    <property type="term" value="P:innate immune response"/>
    <property type="evidence" value="ECO:0007669"/>
    <property type="project" value="UniProtKB-KW"/>
</dbReference>
<dbReference type="GO" id="GO:0000122">
    <property type="term" value="P:negative regulation of transcription by RNA polymerase II"/>
    <property type="evidence" value="ECO:0000315"/>
    <property type="project" value="FlyBase"/>
</dbReference>
<dbReference type="GO" id="GO:0034244">
    <property type="term" value="P:negative regulation of transcription elongation by RNA polymerase II"/>
    <property type="evidence" value="ECO:0000314"/>
    <property type="project" value="HGNC-UCL"/>
</dbReference>
<dbReference type="GO" id="GO:0032897">
    <property type="term" value="P:negative regulation of viral transcription"/>
    <property type="evidence" value="ECO:0000315"/>
    <property type="project" value="FlyBase"/>
</dbReference>
<dbReference type="GO" id="GO:1901798">
    <property type="term" value="P:positive regulation of signal transduction by p53 class mediator"/>
    <property type="evidence" value="ECO:0000315"/>
    <property type="project" value="CACAO"/>
</dbReference>
<dbReference type="Gene3D" id="6.10.250.2910">
    <property type="match status" value="1"/>
</dbReference>
<dbReference type="InterPro" id="IPR024872">
    <property type="entry name" value="HEXIM"/>
</dbReference>
<dbReference type="PANTHER" id="PTHR13469">
    <property type="entry name" value="HEXAMETHYLENE BISACETAMIDE INDUCIBLE 1"/>
    <property type="match status" value="1"/>
</dbReference>
<dbReference type="PANTHER" id="PTHR13469:SF7">
    <property type="entry name" value="PROTEIN HEXIM1"/>
    <property type="match status" value="1"/>
</dbReference>
<dbReference type="Pfam" id="PF15313">
    <property type="entry name" value="HEXIM"/>
    <property type="match status" value="1"/>
</dbReference>
<dbReference type="PRINTS" id="PR02094">
    <property type="entry name" value="HEXIMFAMILY"/>
</dbReference>
<evidence type="ECO:0000250" key="1">
    <source>
        <dbReference type="UniProtKB" id="Q8R409"/>
    </source>
</evidence>
<evidence type="ECO:0000255" key="2"/>
<evidence type="ECO:0000256" key="3">
    <source>
        <dbReference type="SAM" id="MobiDB-lite"/>
    </source>
</evidence>
<evidence type="ECO:0000269" key="4">
    <source>
    </source>
</evidence>
<evidence type="ECO:0000269" key="5">
    <source>
    </source>
</evidence>
<evidence type="ECO:0000269" key="6">
    <source>
    </source>
</evidence>
<evidence type="ECO:0000269" key="7">
    <source>
    </source>
</evidence>
<evidence type="ECO:0000269" key="8">
    <source>
    </source>
</evidence>
<evidence type="ECO:0000269" key="9">
    <source>
    </source>
</evidence>
<evidence type="ECO:0000269" key="10">
    <source>
    </source>
</evidence>
<evidence type="ECO:0000269" key="11">
    <source>
    </source>
</evidence>
<evidence type="ECO:0000269" key="12">
    <source>
    </source>
</evidence>
<evidence type="ECO:0000269" key="13">
    <source>
    </source>
</evidence>
<evidence type="ECO:0000269" key="14">
    <source>
    </source>
</evidence>
<evidence type="ECO:0000269" key="15">
    <source>
    </source>
</evidence>
<evidence type="ECO:0000269" key="16">
    <source>
    </source>
</evidence>
<evidence type="ECO:0000269" key="17">
    <source>
    </source>
</evidence>
<evidence type="ECO:0000269" key="18">
    <source>
    </source>
</evidence>
<evidence type="ECO:0000269" key="19">
    <source>
    </source>
</evidence>
<evidence type="ECO:0000269" key="20">
    <source>
    </source>
</evidence>
<evidence type="ECO:0000269" key="21">
    <source>
    </source>
</evidence>
<evidence type="ECO:0000269" key="22">
    <source>
    </source>
</evidence>
<evidence type="ECO:0000269" key="23">
    <source>
    </source>
</evidence>
<evidence type="ECO:0000269" key="24">
    <source>
    </source>
</evidence>
<evidence type="ECO:0000305" key="25"/>
<evidence type="ECO:0007744" key="26">
    <source>
    </source>
</evidence>
<evidence type="ECO:0007744" key="27">
    <source>
    </source>
</evidence>
<evidence type="ECO:0007744" key="28">
    <source>
    </source>
</evidence>
<evidence type="ECO:0007744" key="29">
    <source>
    </source>
</evidence>
<evidence type="ECO:0007829" key="30">
    <source>
        <dbReference type="PDB" id="3S9G"/>
    </source>
</evidence>
<feature type="chain" id="PRO_0000305263" description="Protein HEXIM1">
    <location>
        <begin position="1"/>
        <end position="359"/>
    </location>
</feature>
<feature type="region of interest" description="Disordered" evidence="3">
    <location>
        <begin position="1"/>
        <end position="163"/>
    </location>
</feature>
<feature type="region of interest" description="Basic region; mediates nuclear localization and interaction with 7SK snRNA and NR3C1" evidence="13">
    <location>
        <begin position="150"/>
        <end position="177"/>
    </location>
</feature>
<feature type="region of interest" description="Interaction with P-TEFb">
    <location>
        <begin position="202"/>
        <end position="205"/>
    </location>
</feature>
<feature type="region of interest" description="Autoinhibitory acidic region; in absence of 7SK snRNA interacts with the basic region preventing interaction with P-TEFb and modulating subcellular localization">
    <location>
        <begin position="210"/>
        <end position="250"/>
    </location>
</feature>
<feature type="region of interest" description="Disordered" evidence="3">
    <location>
        <begin position="213"/>
        <end position="262"/>
    </location>
</feature>
<feature type="region of interest" description="Mediates interaction with CCNT1">
    <location>
        <begin position="286"/>
        <end position="314"/>
    </location>
</feature>
<feature type="region of interest" description="Required for inhibition of ESR1-dependent transcription">
    <location>
        <begin position="310"/>
        <end position="355"/>
    </location>
</feature>
<feature type="coiled-coil region" evidence="2">
    <location>
        <begin position="283"/>
        <end position="349"/>
    </location>
</feature>
<feature type="compositionally biased region" description="Polar residues" evidence="3">
    <location>
        <begin position="9"/>
        <end position="19"/>
    </location>
</feature>
<feature type="compositionally biased region" description="Basic and acidic residues" evidence="3">
    <location>
        <begin position="34"/>
        <end position="47"/>
    </location>
</feature>
<feature type="compositionally biased region" description="Basic and acidic residues" evidence="3">
    <location>
        <begin position="84"/>
        <end position="93"/>
    </location>
</feature>
<feature type="compositionally biased region" description="Basic residues" evidence="3">
    <location>
        <begin position="148"/>
        <end position="163"/>
    </location>
</feature>
<feature type="compositionally biased region" description="Acidic residues" evidence="3">
    <location>
        <begin position="236"/>
        <end position="251"/>
    </location>
</feature>
<feature type="modified residue" description="Phosphoserine" evidence="26">
    <location>
        <position position="97"/>
    </location>
</feature>
<feature type="modified residue" description="Phosphoserine" evidence="26">
    <location>
        <position position="98"/>
    </location>
</feature>
<feature type="modified residue" description="Phosphoserine" evidence="26 27 28">
    <location>
        <position position="233"/>
    </location>
</feature>
<feature type="modified residue" description="Phosphothreonine" evidence="26 27 28">
    <location>
        <position position="236"/>
    </location>
</feature>
<feature type="modified residue" description="Phosphoserine" evidence="26 27 28">
    <location>
        <position position="237"/>
    </location>
</feature>
<feature type="modified residue" description="Phosphoserine" evidence="26 27 28 29">
    <location>
        <position position="252"/>
    </location>
</feature>
<feature type="modified residue" description="Phosphoserine" evidence="1">
    <location>
        <position position="260"/>
    </location>
</feature>
<feature type="mutagenesis site" description="Abolishes interaction with 7SK snRNA." evidence="9">
    <original>KHRR</original>
    <variation>ILAA</variation>
    <location>
        <begin position="152"/>
        <end position="155"/>
    </location>
</feature>
<feature type="mutagenesis site" description="Abolishes interaction with 7SK snRNA." evidence="15">
    <original>RRR</original>
    <variation>AAA</variation>
    <location>
        <begin position="154"/>
        <end position="156"/>
    </location>
</feature>
<feature type="mutagenesis site" description="Abolishes interaction with P-TEFb; when associated with D-205." evidence="9">
    <original>Y</original>
    <variation>D</variation>
    <location>
        <position position="203"/>
    </location>
</feature>
<feature type="mutagenesis site" description="Abolishes interaction with P-TEFb. Same effect; when associated with D-203." evidence="9">
    <original>T</original>
    <variation>D</variation>
    <location>
        <position position="205"/>
    </location>
</feature>
<feature type="mutagenesis site" description="Partial loss of function." evidence="14">
    <original>F</original>
    <variation>A</variation>
    <variation>D</variation>
    <variation>K</variation>
    <location>
        <position position="208"/>
    </location>
</feature>
<feature type="mutagenesis site" description="Loss of function." evidence="14">
    <original>Y</original>
    <variation>A</variation>
    <variation>E</variation>
    <location>
        <position position="271"/>
    </location>
</feature>
<feature type="mutagenesis site" description="Loss of oligomerization; when associated with A-294; A-332 and A-339. Loss of function and interaction with P-TEFb; when associated with A-294." evidence="16">
    <original>L</original>
    <variation>A</variation>
    <location>
        <position position="287"/>
    </location>
</feature>
<feature type="mutagenesis site" description="Loss of oligomerization; when associated with A-287; A-332 and A-339. Loss of function and interaction with P-TEFb; when associated with A-287." evidence="16">
    <original>L</original>
    <variation>A</variation>
    <location>
        <position position="294"/>
    </location>
</feature>
<feature type="mutagenesis site" description="Loss of oligomerization; when associated with A-287; A-294 and A-339." evidence="16">
    <original>L</original>
    <variation>A</variation>
    <location>
        <position position="332"/>
    </location>
</feature>
<feature type="mutagenesis site" description="Loss of oligomerization; when associated with A-287; A-294 and A-332." evidence="16">
    <original>L</original>
    <variation>A</variation>
    <location>
        <position position="339"/>
    </location>
</feature>
<feature type="helix" evidence="30">
    <location>
        <begin position="268"/>
        <end position="280"/>
    </location>
</feature>
<feature type="helix" evidence="30">
    <location>
        <begin position="284"/>
        <end position="315"/>
    </location>
</feature>
<feature type="helix" evidence="30">
    <location>
        <begin position="319"/>
        <end position="348"/>
    </location>
</feature>
<accession>O94992</accession>
<accession>B2R8Y5</accession>
<organism>
    <name type="scientific">Homo sapiens</name>
    <name type="common">Human</name>
    <dbReference type="NCBI Taxonomy" id="9606"/>
    <lineage>
        <taxon>Eukaryota</taxon>
        <taxon>Metazoa</taxon>
        <taxon>Chordata</taxon>
        <taxon>Craniata</taxon>
        <taxon>Vertebrata</taxon>
        <taxon>Euteleostomi</taxon>
        <taxon>Mammalia</taxon>
        <taxon>Eutheria</taxon>
        <taxon>Euarchontoglires</taxon>
        <taxon>Primates</taxon>
        <taxon>Haplorrhini</taxon>
        <taxon>Catarrhini</taxon>
        <taxon>Hominidae</taxon>
        <taxon>Homo</taxon>
    </lineage>
</organism>